<gene>
    <name evidence="1" type="primary">M</name>
</gene>
<organismHost>
    <name type="scientific">Aves</name>
    <dbReference type="NCBI Taxonomy" id="8782"/>
</organismHost>
<keyword id="KW-0025">Alternative splicing</keyword>
<keyword id="KW-1048">Host nucleus</keyword>
<keyword id="KW-0472">Membrane</keyword>
<keyword id="KW-0694">RNA-binding</keyword>
<keyword id="KW-0468">Viral matrix protein</keyword>
<keyword id="KW-0946">Virion</keyword>
<proteinExistence type="inferred from homology"/>
<dbReference type="EMBL" id="CY005859">
    <property type="protein sequence ID" value="ABB21762.1"/>
    <property type="molecule type" value="Genomic_RNA"/>
</dbReference>
<dbReference type="SMR" id="Q20NV9"/>
<dbReference type="Proteomes" id="UP000008581">
    <property type="component" value="Genome"/>
</dbReference>
<dbReference type="GO" id="GO:0042025">
    <property type="term" value="C:host cell nucleus"/>
    <property type="evidence" value="ECO:0007669"/>
    <property type="project" value="UniProtKB-SubCell"/>
</dbReference>
<dbReference type="GO" id="GO:0016020">
    <property type="term" value="C:membrane"/>
    <property type="evidence" value="ECO:0007669"/>
    <property type="project" value="UniProtKB-KW"/>
</dbReference>
<dbReference type="GO" id="GO:0055036">
    <property type="term" value="C:virion membrane"/>
    <property type="evidence" value="ECO:0007669"/>
    <property type="project" value="UniProtKB-SubCell"/>
</dbReference>
<dbReference type="GO" id="GO:0003723">
    <property type="term" value="F:RNA binding"/>
    <property type="evidence" value="ECO:0007669"/>
    <property type="project" value="UniProtKB-UniRule"/>
</dbReference>
<dbReference type="GO" id="GO:0039660">
    <property type="term" value="F:structural constituent of virion"/>
    <property type="evidence" value="ECO:0007669"/>
    <property type="project" value="UniProtKB-UniRule"/>
</dbReference>
<dbReference type="GO" id="GO:0046761">
    <property type="term" value="P:viral budding from plasma membrane"/>
    <property type="evidence" value="ECO:0007669"/>
    <property type="project" value="UniProtKB-UniRule"/>
</dbReference>
<dbReference type="FunFam" id="1.10.10.180:FF:000001">
    <property type="entry name" value="Matrix protein 1"/>
    <property type="match status" value="1"/>
</dbReference>
<dbReference type="FunFam" id="1.20.91.10:FF:000001">
    <property type="entry name" value="Matrix protein 1"/>
    <property type="match status" value="1"/>
</dbReference>
<dbReference type="Gene3D" id="1.10.10.180">
    <property type="match status" value="1"/>
</dbReference>
<dbReference type="Gene3D" id="1.20.91.10">
    <property type="match status" value="1"/>
</dbReference>
<dbReference type="HAMAP" id="MF_04068">
    <property type="entry name" value="INFV_M1"/>
    <property type="match status" value="1"/>
</dbReference>
<dbReference type="InterPro" id="IPR036039">
    <property type="entry name" value="Flu_matrix_M1"/>
</dbReference>
<dbReference type="InterPro" id="IPR013188">
    <property type="entry name" value="Flu_matrix_M1_C"/>
</dbReference>
<dbReference type="InterPro" id="IPR001561">
    <property type="entry name" value="Flu_matrix_M1_N"/>
</dbReference>
<dbReference type="InterPro" id="IPR015423">
    <property type="entry name" value="Flu_matrix_M1_N_sub1"/>
</dbReference>
<dbReference type="InterPro" id="IPR015799">
    <property type="entry name" value="Flu_matrix_M1_N_sub2"/>
</dbReference>
<dbReference type="InterPro" id="IPR037533">
    <property type="entry name" value="INFV_M1"/>
</dbReference>
<dbReference type="Pfam" id="PF00598">
    <property type="entry name" value="Flu_M1"/>
    <property type="match status" value="1"/>
</dbReference>
<dbReference type="Pfam" id="PF08289">
    <property type="entry name" value="Flu_M1_C"/>
    <property type="match status" value="1"/>
</dbReference>
<dbReference type="SMART" id="SM00759">
    <property type="entry name" value="Flu_M1_C"/>
    <property type="match status" value="1"/>
</dbReference>
<dbReference type="SUPFAM" id="SSF48145">
    <property type="entry name" value="Influenza virus matrix protein M1"/>
    <property type="match status" value="1"/>
</dbReference>
<evidence type="ECO:0000255" key="1">
    <source>
        <dbReference type="HAMAP-Rule" id="MF_04068"/>
    </source>
</evidence>
<feature type="chain" id="PRO_0000326315" description="Matrix protein 1">
    <location>
        <begin position="1"/>
        <end position="252"/>
    </location>
</feature>
<feature type="region of interest" description="Membrane-binding" evidence="1">
    <location>
        <begin position="1"/>
        <end position="164"/>
    </location>
</feature>
<feature type="region of interest" description="RNP-binding" evidence="1">
    <location>
        <begin position="165"/>
        <end position="252"/>
    </location>
</feature>
<feature type="short sequence motif" description="Nuclear localization signal" evidence="1">
    <location>
        <begin position="101"/>
        <end position="105"/>
    </location>
</feature>
<comment type="function">
    <text evidence="1">Plays critical roles in virus replication, from virus entry and uncoating to assembly and budding of the virus particle. M1 binding to ribonucleocapsids (RNPs) in nucleus seems to inhibit viral transcription. Interaction of viral NEP with M1-RNP is thought to promote nuclear export of the complex, which is targeted to the virion assembly site at the apical plasma membrane in polarized epithelial cells. Interactions with NA and HA may bring M1, a non-raft-associated protein, into lipid rafts. Forms a continuous shell on the inner side of the lipid bilayer in virion, where it binds the RNP. During virus entry into cell, the M2 ion channel acidifies the internal virion core, inducing M1 dissociation from the RNP. M1-free RNPs are transported to the nucleus, where viral transcription and replication can take place.</text>
</comment>
<comment type="function">
    <text evidence="1">Determines the virion's shape: spherical or filamentous. Clinical isolates of influenza are characterized by the presence of significant proportion of filamentous virions, whereas after multiple passage on eggs or cell culture, virions have only spherical morphology. Filamentous virions are thought to be important to infect neighboring cells, and spherical virions more suited to spread through aerosol between hosts organisms.</text>
</comment>
<comment type="subunit">
    <text evidence="1">Homodimer and homomultimer. Interacts with NEP. Binds ribonucleocapsid by both interacting with genomic RNA and NP protein. May interact with HA and NA. Cannot bind NP without genomic RNA.</text>
</comment>
<comment type="subcellular location">
    <subcellularLocation>
        <location evidence="1">Virion membrane</location>
        <topology evidence="1">Peripheral membrane protein</topology>
        <orientation evidence="1">Cytoplasmic side</orientation>
    </subcellularLocation>
    <subcellularLocation>
        <location evidence="1">Host nucleus</location>
    </subcellularLocation>
</comment>
<comment type="alternative products">
    <event type="alternative splicing"/>
    <isoform>
        <id>Q20NV9-1</id>
        <name>M1</name>
        <sequence type="displayed"/>
    </isoform>
    <isoform>
        <id>Q20NW0-1</id>
        <name>M2</name>
        <sequence type="external"/>
    </isoform>
    <text>Only the first 9 residues are shared by the 2 isoforms.</text>
</comment>
<comment type="miscellaneous">
    <text evidence="1">Most abundant protein in virion. When expressed alone can form virus-like particles in transfected cells.</text>
</comment>
<comment type="similarity">
    <text evidence="1">Belongs to the influenza viruses Matrix protein M1 family.</text>
</comment>
<organism>
    <name type="scientific">Influenza A virus (strain A/Gull/Minnesota/945/1980 H13N6)</name>
    <dbReference type="NCBI Taxonomy" id="385597"/>
    <lineage>
        <taxon>Viruses</taxon>
        <taxon>Riboviria</taxon>
        <taxon>Orthornavirae</taxon>
        <taxon>Negarnaviricota</taxon>
        <taxon>Polyploviricotina</taxon>
        <taxon>Insthoviricetes</taxon>
        <taxon>Articulavirales</taxon>
        <taxon>Orthomyxoviridae</taxon>
        <taxon>Alphainfluenzavirus</taxon>
        <taxon>Alphainfluenzavirus influenzae</taxon>
        <taxon>Influenza A virus</taxon>
    </lineage>
</organism>
<protein>
    <recommendedName>
        <fullName evidence="1">Matrix protein 1</fullName>
        <shortName evidence="1">M1</shortName>
    </recommendedName>
</protein>
<sequence length="252" mass="27910">MSLLTEVETYVLSIVPSGPLKAEIAQRLEDVFAGKNTDLEALMEWLKTRPILSPLTKGILGFVFTLTVPSERGLQRRRFVQNALNGNGDPNNMDRAVKLYRKLKREITFHGAKEVALSYSTGALASCMGLIYNRMGTVTTEVAFGLVCATCEQIADSQHRSHRQMVTTTNPLIRHENRMVLASTTAKAMEQMAGSSEQAAEAMEVASQARQMVQAMRTIGTHPSSSAGLKDDLLENLQAYQKRMGVQMQRFK</sequence>
<accession>Q20NV9</accession>
<reference key="1">
    <citation type="journal article" date="2006" name="Science">
        <title>Large-scale sequence analysis of avian influenza isolates.</title>
        <authorList>
            <person name="Obenauer J.C."/>
            <person name="Denson J."/>
            <person name="Mehta P.K."/>
            <person name="Su X."/>
            <person name="Mukatira S."/>
            <person name="Finkelstein D.B."/>
            <person name="Xu X."/>
            <person name="Wang J."/>
            <person name="Ma J."/>
            <person name="Fan Y."/>
            <person name="Rakestraw K.M."/>
            <person name="Webster R.G."/>
            <person name="Hoffmann E."/>
            <person name="Krauss S."/>
            <person name="Zheng J."/>
            <person name="Zhang Z."/>
            <person name="Naeve C.W."/>
        </authorList>
    </citation>
    <scope>NUCLEOTIDE SEQUENCE [GENOMIC RNA]</scope>
</reference>
<name>M1_I80AD</name>